<dbReference type="EC" id="5.4.99.12" evidence="1"/>
<dbReference type="EMBL" id="CP000050">
    <property type="protein sequence ID" value="AAY48638.1"/>
    <property type="molecule type" value="Genomic_DNA"/>
</dbReference>
<dbReference type="RefSeq" id="WP_011037676.1">
    <property type="nucleotide sequence ID" value="NZ_CP155948.1"/>
</dbReference>
<dbReference type="SMR" id="Q4UWD5"/>
<dbReference type="GeneID" id="58012848"/>
<dbReference type="KEGG" id="xcb:XC_1572"/>
<dbReference type="HOGENOM" id="CLU_014673_0_2_6"/>
<dbReference type="Proteomes" id="UP000000420">
    <property type="component" value="Chromosome"/>
</dbReference>
<dbReference type="GO" id="GO:0003723">
    <property type="term" value="F:RNA binding"/>
    <property type="evidence" value="ECO:0007669"/>
    <property type="project" value="InterPro"/>
</dbReference>
<dbReference type="GO" id="GO:0160147">
    <property type="term" value="F:tRNA pseudouridine(38-40) synthase activity"/>
    <property type="evidence" value="ECO:0007669"/>
    <property type="project" value="UniProtKB-EC"/>
</dbReference>
<dbReference type="GO" id="GO:0031119">
    <property type="term" value="P:tRNA pseudouridine synthesis"/>
    <property type="evidence" value="ECO:0007669"/>
    <property type="project" value="UniProtKB-UniRule"/>
</dbReference>
<dbReference type="CDD" id="cd02570">
    <property type="entry name" value="PseudoU_synth_EcTruA"/>
    <property type="match status" value="1"/>
</dbReference>
<dbReference type="FunFam" id="3.30.70.580:FF:000001">
    <property type="entry name" value="tRNA pseudouridine synthase A"/>
    <property type="match status" value="1"/>
</dbReference>
<dbReference type="Gene3D" id="3.30.70.660">
    <property type="entry name" value="Pseudouridine synthase I, catalytic domain, C-terminal subdomain"/>
    <property type="match status" value="1"/>
</dbReference>
<dbReference type="Gene3D" id="3.30.70.580">
    <property type="entry name" value="Pseudouridine synthase I, catalytic domain, N-terminal subdomain"/>
    <property type="match status" value="1"/>
</dbReference>
<dbReference type="HAMAP" id="MF_00171">
    <property type="entry name" value="TruA"/>
    <property type="match status" value="1"/>
</dbReference>
<dbReference type="InterPro" id="IPR020103">
    <property type="entry name" value="PsdUridine_synth_cat_dom_sf"/>
</dbReference>
<dbReference type="InterPro" id="IPR001406">
    <property type="entry name" value="PsdUridine_synth_TruA"/>
</dbReference>
<dbReference type="InterPro" id="IPR020097">
    <property type="entry name" value="PsdUridine_synth_TruA_a/b_dom"/>
</dbReference>
<dbReference type="InterPro" id="IPR020095">
    <property type="entry name" value="PsdUridine_synth_TruA_C"/>
</dbReference>
<dbReference type="InterPro" id="IPR020094">
    <property type="entry name" value="TruA/RsuA/RluB/E/F_N"/>
</dbReference>
<dbReference type="NCBIfam" id="TIGR00071">
    <property type="entry name" value="hisT_truA"/>
    <property type="match status" value="1"/>
</dbReference>
<dbReference type="PANTHER" id="PTHR11142">
    <property type="entry name" value="PSEUDOURIDYLATE SYNTHASE"/>
    <property type="match status" value="1"/>
</dbReference>
<dbReference type="PANTHER" id="PTHR11142:SF0">
    <property type="entry name" value="TRNA PSEUDOURIDINE SYNTHASE-LIKE 1"/>
    <property type="match status" value="1"/>
</dbReference>
<dbReference type="Pfam" id="PF01416">
    <property type="entry name" value="PseudoU_synth_1"/>
    <property type="match status" value="2"/>
</dbReference>
<dbReference type="PIRSF" id="PIRSF001430">
    <property type="entry name" value="tRNA_psdUrid_synth"/>
    <property type="match status" value="1"/>
</dbReference>
<dbReference type="SUPFAM" id="SSF55120">
    <property type="entry name" value="Pseudouridine synthase"/>
    <property type="match status" value="1"/>
</dbReference>
<keyword id="KW-0413">Isomerase</keyword>
<keyword id="KW-0819">tRNA processing</keyword>
<evidence type="ECO:0000255" key="1">
    <source>
        <dbReference type="HAMAP-Rule" id="MF_00171"/>
    </source>
</evidence>
<sequence length="257" mass="28387">MRYALGVEYDGSEFQGWQQLGEHGGPSVQATLQAALSSVADAPIQVVCAGRTDAGVHGECQVVHFDSDARREPRGWMLGTTARLPPSVAVRWCVPAAEDFHARFSARARRYRYRLLNRQIRPALYRQTLSWERRPLDAQAMHTAAQALLGENDFGAFRSVQCQALHARRNLQAITVQRLGEVVEVQVQANAFLHHMVRNIVGSLILVGTGEQPIDWIATLLAGRDRTVAGPTAPPQGLVFIGPLYPAEWHLPAEVTQ</sequence>
<feature type="chain" id="PRO_1000017212" description="tRNA pseudouridine synthase A">
    <location>
        <begin position="1"/>
        <end position="257"/>
    </location>
</feature>
<feature type="active site" description="Nucleophile" evidence="1">
    <location>
        <position position="53"/>
    </location>
</feature>
<feature type="binding site" evidence="1">
    <location>
        <position position="111"/>
    </location>
    <ligand>
        <name>substrate</name>
    </ligand>
</feature>
<comment type="function">
    <text evidence="1">Formation of pseudouridine at positions 38, 39 and 40 in the anticodon stem and loop of transfer RNAs.</text>
</comment>
<comment type="catalytic activity">
    <reaction evidence="1">
        <text>uridine(38/39/40) in tRNA = pseudouridine(38/39/40) in tRNA</text>
        <dbReference type="Rhea" id="RHEA:22376"/>
        <dbReference type="Rhea" id="RHEA-COMP:10085"/>
        <dbReference type="Rhea" id="RHEA-COMP:10087"/>
        <dbReference type="ChEBI" id="CHEBI:65314"/>
        <dbReference type="ChEBI" id="CHEBI:65315"/>
        <dbReference type="EC" id="5.4.99.12"/>
    </reaction>
</comment>
<comment type="subunit">
    <text evidence="1">Homodimer.</text>
</comment>
<comment type="similarity">
    <text evidence="1">Belongs to the tRNA pseudouridine synthase TruA family.</text>
</comment>
<reference key="1">
    <citation type="journal article" date="2005" name="Genome Res.">
        <title>Comparative and functional genomic analyses of the pathogenicity of phytopathogen Xanthomonas campestris pv. campestris.</title>
        <authorList>
            <person name="Qian W."/>
            <person name="Jia Y."/>
            <person name="Ren S.-X."/>
            <person name="He Y.-Q."/>
            <person name="Feng J.-X."/>
            <person name="Lu L.-F."/>
            <person name="Sun Q."/>
            <person name="Ying G."/>
            <person name="Tang D.-J."/>
            <person name="Tang H."/>
            <person name="Wu W."/>
            <person name="Hao P."/>
            <person name="Wang L."/>
            <person name="Jiang B.-L."/>
            <person name="Zeng S."/>
            <person name="Gu W.-Y."/>
            <person name="Lu G."/>
            <person name="Rong L."/>
            <person name="Tian Y."/>
            <person name="Yao Z."/>
            <person name="Fu G."/>
            <person name="Chen B."/>
            <person name="Fang R."/>
            <person name="Qiang B."/>
            <person name="Chen Z."/>
            <person name="Zhao G.-P."/>
            <person name="Tang J.-L."/>
            <person name="He C."/>
        </authorList>
    </citation>
    <scope>NUCLEOTIDE SEQUENCE [LARGE SCALE GENOMIC DNA]</scope>
    <source>
        <strain>8004</strain>
    </source>
</reference>
<gene>
    <name evidence="1" type="primary">truA</name>
    <name type="ordered locus">XC_1572</name>
</gene>
<organism>
    <name type="scientific">Xanthomonas campestris pv. campestris (strain 8004)</name>
    <dbReference type="NCBI Taxonomy" id="314565"/>
    <lineage>
        <taxon>Bacteria</taxon>
        <taxon>Pseudomonadati</taxon>
        <taxon>Pseudomonadota</taxon>
        <taxon>Gammaproteobacteria</taxon>
        <taxon>Lysobacterales</taxon>
        <taxon>Lysobacteraceae</taxon>
        <taxon>Xanthomonas</taxon>
    </lineage>
</organism>
<protein>
    <recommendedName>
        <fullName evidence="1">tRNA pseudouridine synthase A</fullName>
        <ecNumber evidence="1">5.4.99.12</ecNumber>
    </recommendedName>
    <alternativeName>
        <fullName evidence="1">tRNA pseudouridine(38-40) synthase</fullName>
    </alternativeName>
    <alternativeName>
        <fullName evidence="1">tRNA pseudouridylate synthase I</fullName>
    </alternativeName>
    <alternativeName>
        <fullName evidence="1">tRNA-uridine isomerase I</fullName>
    </alternativeName>
</protein>
<name>TRUA_XANC8</name>
<proteinExistence type="inferred from homology"/>
<accession>Q4UWD5</accession>